<keyword id="KW-0256">Endoplasmic reticulum</keyword>
<keyword id="KW-0349">Heme</keyword>
<keyword id="KW-0408">Iron</keyword>
<keyword id="KW-0479">Metal-binding</keyword>
<keyword id="KW-0503">Monooxygenase</keyword>
<keyword id="KW-0560">Oxidoreductase</keyword>
<keyword id="KW-1185">Reference proteome</keyword>
<accession>W7LC91</accession>
<accession>Q8J2Q5</accession>
<proteinExistence type="evidence at transcript level"/>
<sequence length="596" mass="67191">MRGLNNIAVALALSAIWSFGLDLGRHGTSGSSLLLALFRTLCKAYPFVVISHFVWSAIIWPTFFSPLRQLPNVPSDGWLSKETLRLVSEPRGVPQSDWINSLSNRPVDLARYRSFLGFERLLIISPKALAEVLTTKSYDFRKPGLIVSELKQATGMGVLLAEGSEHKSQRKALQTAFNYRHIKNLYPVFWDVAGEFATVLEKQIPTGTPRTSDTTAVIDIVDWASRATLDIIGRAGMGQGFDAIQNDDSRLHQAYRMIFEPSRGAIFLALLRLIFPERLVNWLPLRRNKRMRHGIQVIRSKCQELIRERKEKIKRQKAGVDNSGNDILTVALLNGVFTDEQLIDQLMTFLAAGHETTATALTWAIYILCKQPEVQNRLREEIRMHFPNPKGWPRSERPSSNTLQQAIDFKLPYLNVVCLEVMRYFAPIPLTMREATCDTTILHTFVPAGTRIILAPRVTNRDSALWGPDANNFNPDRWLSPKNGNREATEQSKFKIGNQKRDSTAAPEVTQEEVRGRTEARSNYADLTFLHGPRSCIGQSFARVEFAILLATLIANFEFQIEDESLLDERNISISRGATSRIVGGLKVRVRPIAVV</sequence>
<gene>
    <name evidence="5" type="primary">FUM15</name>
    <name type="ORF">FVEG_14636</name>
</gene>
<protein>
    <recommendedName>
        <fullName evidence="5">Cytochrome P450 monooxygenase FUM15</fullName>
        <ecNumber evidence="7">1.-.-.-</ecNumber>
    </recommendedName>
    <alternativeName>
        <fullName evidence="5">Fumonisin biosynthesis cluster protein 15</fullName>
    </alternativeName>
</protein>
<dbReference type="EC" id="1.-.-.-" evidence="7"/>
<dbReference type="EMBL" id="AF155773">
    <property type="protein sequence ID" value="AAN74818.2"/>
    <property type="molecule type" value="Genomic_DNA"/>
</dbReference>
<dbReference type="EMBL" id="CM000578">
    <property type="protein sequence ID" value="EWG36206.1"/>
    <property type="molecule type" value="Genomic_DNA"/>
</dbReference>
<dbReference type="RefSeq" id="XP_018742397.1">
    <property type="nucleotide sequence ID" value="XM_018903583.1"/>
</dbReference>
<dbReference type="SMR" id="W7LC91"/>
<dbReference type="STRING" id="334819.W7LC91"/>
<dbReference type="GeneID" id="30071512"/>
<dbReference type="KEGG" id="fvr:FVEG_14636"/>
<dbReference type="VEuPathDB" id="FungiDB:FVEG_14636"/>
<dbReference type="OrthoDB" id="56166at110618"/>
<dbReference type="Proteomes" id="UP000009096">
    <property type="component" value="Chromosome 1"/>
</dbReference>
<dbReference type="GO" id="GO:0020037">
    <property type="term" value="F:heme binding"/>
    <property type="evidence" value="ECO:0007669"/>
    <property type="project" value="InterPro"/>
</dbReference>
<dbReference type="GO" id="GO:0005506">
    <property type="term" value="F:iron ion binding"/>
    <property type="evidence" value="ECO:0007669"/>
    <property type="project" value="InterPro"/>
</dbReference>
<dbReference type="GO" id="GO:0004497">
    <property type="term" value="F:monooxygenase activity"/>
    <property type="evidence" value="ECO:0007669"/>
    <property type="project" value="UniProtKB-KW"/>
</dbReference>
<dbReference type="GO" id="GO:0016705">
    <property type="term" value="F:oxidoreductase activity, acting on paired donors, with incorporation or reduction of molecular oxygen"/>
    <property type="evidence" value="ECO:0007669"/>
    <property type="project" value="InterPro"/>
</dbReference>
<dbReference type="GO" id="GO:1900541">
    <property type="term" value="P:fumonisin biosynthetic process"/>
    <property type="evidence" value="ECO:0000315"/>
    <property type="project" value="GO_Central"/>
</dbReference>
<dbReference type="CDD" id="cd11069">
    <property type="entry name" value="CYP_FUM15-like"/>
    <property type="match status" value="1"/>
</dbReference>
<dbReference type="Gene3D" id="1.10.630.10">
    <property type="entry name" value="Cytochrome P450"/>
    <property type="match status" value="1"/>
</dbReference>
<dbReference type="InterPro" id="IPR001128">
    <property type="entry name" value="Cyt_P450"/>
</dbReference>
<dbReference type="InterPro" id="IPR002401">
    <property type="entry name" value="Cyt_P450_E_grp-I"/>
</dbReference>
<dbReference type="InterPro" id="IPR036396">
    <property type="entry name" value="Cyt_P450_sf"/>
</dbReference>
<dbReference type="InterPro" id="IPR050121">
    <property type="entry name" value="Cytochrome_P450_monoxygenase"/>
</dbReference>
<dbReference type="PANTHER" id="PTHR24305">
    <property type="entry name" value="CYTOCHROME P450"/>
    <property type="match status" value="1"/>
</dbReference>
<dbReference type="PANTHER" id="PTHR24305:SF227">
    <property type="entry name" value="P450, PUTATIVE (EUROFUNG)-RELATED"/>
    <property type="match status" value="1"/>
</dbReference>
<dbReference type="Pfam" id="PF00067">
    <property type="entry name" value="p450"/>
    <property type="match status" value="1"/>
</dbReference>
<dbReference type="PRINTS" id="PR00463">
    <property type="entry name" value="EP450I"/>
</dbReference>
<dbReference type="PRINTS" id="PR00385">
    <property type="entry name" value="P450"/>
</dbReference>
<dbReference type="SUPFAM" id="SSF48264">
    <property type="entry name" value="Cytochrome P450"/>
    <property type="match status" value="1"/>
</dbReference>
<evidence type="ECO:0000250" key="1">
    <source>
        <dbReference type="UniProtKB" id="P04798"/>
    </source>
</evidence>
<evidence type="ECO:0000256" key="2">
    <source>
        <dbReference type="SAM" id="MobiDB-lite"/>
    </source>
</evidence>
<evidence type="ECO:0000269" key="3">
    <source>
    </source>
</evidence>
<evidence type="ECO:0000269" key="4">
    <source>
    </source>
</evidence>
<evidence type="ECO:0000303" key="5">
    <source>
    </source>
</evidence>
<evidence type="ECO:0000305" key="6"/>
<evidence type="ECO:0000305" key="7">
    <source>
    </source>
</evidence>
<evidence type="ECO:0000305" key="8">
    <source>
    </source>
</evidence>
<name>FUM15_GIBM7</name>
<organism>
    <name type="scientific">Gibberella moniliformis (strain M3125 / FGSC 7600)</name>
    <name type="common">Maize ear and stalk rot fungus</name>
    <name type="synonym">Fusarium verticillioides</name>
    <dbReference type="NCBI Taxonomy" id="334819"/>
    <lineage>
        <taxon>Eukaryota</taxon>
        <taxon>Fungi</taxon>
        <taxon>Dikarya</taxon>
        <taxon>Ascomycota</taxon>
        <taxon>Pezizomycotina</taxon>
        <taxon>Sordariomycetes</taxon>
        <taxon>Hypocreomycetidae</taxon>
        <taxon>Hypocreales</taxon>
        <taxon>Nectriaceae</taxon>
        <taxon>Fusarium</taxon>
        <taxon>Fusarium fujikuroi species complex</taxon>
    </lineage>
</organism>
<reference key="1">
    <citation type="journal article" date="2003" name="Fungal Genet. Biol.">
        <title>Co-expression of 15 contiguous genes delineates a fumonisin biosynthetic gene cluster in Gibberella moniliformis.</title>
        <authorList>
            <person name="Proctor R.H."/>
            <person name="Brown D.W."/>
            <person name="Plattner R.D."/>
            <person name="Desjardins A.E."/>
        </authorList>
    </citation>
    <scope>NUCLEOTIDE SEQUENCE [GENOMIC DNA]</scope>
    <scope>PATHWAY</scope>
    <source>
        <strain>M3125 / FGSC 7600</strain>
    </source>
</reference>
<reference key="2">
    <citation type="journal article" date="2010" name="Nature">
        <title>Comparative genomics reveals mobile pathogenicity chromosomes in Fusarium.</title>
        <authorList>
            <person name="Ma L.-J."/>
            <person name="van der Does H.C."/>
            <person name="Borkovich K.A."/>
            <person name="Coleman J.J."/>
            <person name="Daboussi M.-J."/>
            <person name="Di Pietro A."/>
            <person name="Dufresne M."/>
            <person name="Freitag M."/>
            <person name="Grabherr M."/>
            <person name="Henrissat B."/>
            <person name="Houterman P.M."/>
            <person name="Kang S."/>
            <person name="Shim W.-B."/>
            <person name="Woloshuk C."/>
            <person name="Xie X."/>
            <person name="Xu J.-R."/>
            <person name="Antoniw J."/>
            <person name="Baker S.E."/>
            <person name="Bluhm B.H."/>
            <person name="Breakspear A."/>
            <person name="Brown D.W."/>
            <person name="Butchko R.A.E."/>
            <person name="Chapman S."/>
            <person name="Coulson R."/>
            <person name="Coutinho P.M."/>
            <person name="Danchin E.G.J."/>
            <person name="Diener A."/>
            <person name="Gale L.R."/>
            <person name="Gardiner D.M."/>
            <person name="Goff S."/>
            <person name="Hammond-Kosack K.E."/>
            <person name="Hilburn K."/>
            <person name="Hua-Van A."/>
            <person name="Jonkers W."/>
            <person name="Kazan K."/>
            <person name="Kodira C.D."/>
            <person name="Koehrsen M."/>
            <person name="Kumar L."/>
            <person name="Lee Y.-H."/>
            <person name="Li L."/>
            <person name="Manners J.M."/>
            <person name="Miranda-Saavedra D."/>
            <person name="Mukherjee M."/>
            <person name="Park G."/>
            <person name="Park J."/>
            <person name="Park S.-Y."/>
            <person name="Proctor R.H."/>
            <person name="Regev A."/>
            <person name="Ruiz-Roldan M.C."/>
            <person name="Sain D."/>
            <person name="Sakthikumar S."/>
            <person name="Sykes S."/>
            <person name="Schwartz D.C."/>
            <person name="Turgeon B.G."/>
            <person name="Wapinski I."/>
            <person name="Yoder O."/>
            <person name="Young S."/>
            <person name="Zeng Q."/>
            <person name="Zhou S."/>
            <person name="Galagan J."/>
            <person name="Cuomo C.A."/>
            <person name="Kistler H.C."/>
            <person name="Rep M."/>
        </authorList>
    </citation>
    <scope>NUCLEOTIDE SEQUENCE [LARGE SCALE GENOMIC DNA]</scope>
    <source>
        <strain>M3125 / FGSC 7600</strain>
    </source>
</reference>
<reference evidence="6" key="3">
    <citation type="journal article" date="2024" name="MBio">
        <title>The palmitoyl-CoA ligase Fum16 is part of a Fusarium verticillioides fumonisin subcluster involved in self-protection.</title>
        <authorList>
            <person name="Gherlone F."/>
            <person name="Jojic K."/>
            <person name="Huang Y."/>
            <person name="Hoefgen S."/>
            <person name="Valiante V."/>
            <person name="Janevska S."/>
        </authorList>
    </citation>
    <scope>FUNCTION</scope>
    <scope>SUBCELLULAR LOCATION</scope>
    <scope>INDUCTION BY FUMONISIN B1</scope>
    <scope>DISRUPTION PHENOTYPE</scope>
</reference>
<feature type="chain" id="PRO_0000441143" description="Cytochrome P450 monooxygenase FUM15">
    <location>
        <begin position="1"/>
        <end position="596"/>
    </location>
</feature>
<feature type="region of interest" description="Disordered" evidence="2">
    <location>
        <begin position="476"/>
        <end position="512"/>
    </location>
</feature>
<feature type="compositionally biased region" description="Basic and acidic residues" evidence="2">
    <location>
        <begin position="484"/>
        <end position="503"/>
    </location>
</feature>
<feature type="binding site" description="axial binding residue" evidence="1">
    <location>
        <position position="536"/>
    </location>
    <ligand>
        <name>heme</name>
        <dbReference type="ChEBI" id="CHEBI:30413"/>
    </ligand>
    <ligandPart>
        <name>Fe</name>
        <dbReference type="ChEBI" id="CHEBI:18248"/>
    </ligandPart>
</feature>
<comment type="function">
    <text evidence="3 4 8">Cytochrome P450 monooxygenase; part of the gene cluster that mediates the biosynthesis of fumonisins B1 (FB1), B2 (FB2), B3 (FB3), and B4 (FB4), which are carcinogenic mycotoxins (PubMed:12620260). Within the pathway, FUM15 may be responsible for the hydroxylations at positions C-14 and/or C-15 (PubMed:12620260). Also plays a role in self-protection from FB1 toxicity, probably through derivatization of FB1, and may contribute to ceramide biosynthesis (PubMed:39704544). The biosynthesis starts with the FUM1-catalyzed carbon chain assembly from one molecule of acetyl-CoA, eight molecules of malonyl-CoA, and two molecules of methionine (in S-adenosyl form). The C18 polyketide chain is released from the enzyme by a nucleophilic attack of a carbanion, which is derived from R-carbon of alanine by decarboxylation, on the carbonyl carbon of polyketide acyl chain. This step is catalyzed by the pyridoxal 5'-phosphate-dependent aminoacyl transferase FUM8. The resultant 3-keto intermediate is then stereospecifically reduced to a 3-hydroxyl product by reductase FUM13. Subsequent oxidations at C-10 by the cytochrome P450 monooxygenase FUM2, C-14 and C-15 by FUM6, FUM12 or FUM15, tricarballylic esterification of the hydroxyl groups on C-14 and C-15 by acyltransferase FUM14, and C-5 hydroxylation by 2-keto-glutarate-dependent dioxygenase FUM3 furnish the biosynthesis of fumonisins. The tricarballylic moieties are most likely derived from the citric acid cycle, and their addition to the carbon backbone may involve FUM7, FUM10, FUM11 and FUM14 (Probable).</text>
</comment>
<comment type="cofactor">
    <cofactor evidence="1">
        <name>heme</name>
        <dbReference type="ChEBI" id="CHEBI:30413"/>
    </cofactor>
</comment>
<comment type="pathway">
    <text evidence="3">Secondary metabolite biosynthesis.</text>
</comment>
<comment type="subcellular location">
    <subcellularLocation>
        <location evidence="4">Endoplasmic reticulum</location>
    </subcellularLocation>
</comment>
<comment type="induction">
    <text evidence="4">Induced by fumonisin B1.</text>
</comment>
<comment type="disruption phenotype">
    <text evidence="4">Increases the production of fumonisin B1 (PubMed:39704544). Causes growth inhibition in both solid and liquid media (PubMed:39704544). Increases the production of ceramide intermediates including 3-ketosphinganine, sphinganine and phytosphingosine in comparison to the control (PubMed:39704544).</text>
</comment>
<comment type="similarity">
    <text evidence="6">Belongs to the cytochrome P450 family.</text>
</comment>